<evidence type="ECO:0000255" key="1">
    <source>
        <dbReference type="HAMAP-Rule" id="MF_01347"/>
    </source>
</evidence>
<keyword id="KW-0066">ATP synthesis</keyword>
<keyword id="KW-0067">ATP-binding</keyword>
<keyword id="KW-0997">Cell inner membrane</keyword>
<keyword id="KW-1003">Cell membrane</keyword>
<keyword id="KW-0139">CF(1)</keyword>
<keyword id="KW-0375">Hydrogen ion transport</keyword>
<keyword id="KW-0406">Ion transport</keyword>
<keyword id="KW-0472">Membrane</keyword>
<keyword id="KW-0547">Nucleotide-binding</keyword>
<keyword id="KW-1278">Translocase</keyword>
<keyword id="KW-0813">Transport</keyword>
<protein>
    <recommendedName>
        <fullName evidence="1">ATP synthase subunit beta</fullName>
        <ecNumber evidence="1">7.1.2.2</ecNumber>
    </recommendedName>
    <alternativeName>
        <fullName evidence="1">ATP synthase F1 sector subunit beta</fullName>
    </alternativeName>
    <alternativeName>
        <fullName evidence="1">F-ATPase subunit beta</fullName>
    </alternativeName>
</protein>
<organism>
    <name type="scientific">Nautilia profundicola (strain ATCC BAA-1463 / DSM 18972 / AmH)</name>
    <dbReference type="NCBI Taxonomy" id="598659"/>
    <lineage>
        <taxon>Bacteria</taxon>
        <taxon>Pseudomonadati</taxon>
        <taxon>Campylobacterota</taxon>
        <taxon>Epsilonproteobacteria</taxon>
        <taxon>Nautiliales</taxon>
        <taxon>Nautiliaceae</taxon>
        <taxon>Nautilia</taxon>
    </lineage>
</organism>
<feature type="chain" id="PRO_1000166599" description="ATP synthase subunit beta">
    <location>
        <begin position="1"/>
        <end position="468"/>
    </location>
</feature>
<feature type="binding site" evidence="1">
    <location>
        <begin position="153"/>
        <end position="160"/>
    </location>
    <ligand>
        <name>ATP</name>
        <dbReference type="ChEBI" id="CHEBI:30616"/>
    </ligand>
</feature>
<dbReference type="EC" id="7.1.2.2" evidence="1"/>
<dbReference type="EMBL" id="CP001279">
    <property type="protein sequence ID" value="ACM92177.1"/>
    <property type="molecule type" value="Genomic_DNA"/>
</dbReference>
<dbReference type="RefSeq" id="WP_012663549.1">
    <property type="nucleotide sequence ID" value="NC_012115.1"/>
</dbReference>
<dbReference type="SMR" id="B9L7Y7"/>
<dbReference type="STRING" id="598659.NAMH_0322"/>
<dbReference type="KEGG" id="nam:NAMH_0322"/>
<dbReference type="eggNOG" id="COG0055">
    <property type="taxonomic scope" value="Bacteria"/>
</dbReference>
<dbReference type="HOGENOM" id="CLU_022398_0_2_7"/>
<dbReference type="OrthoDB" id="9801639at2"/>
<dbReference type="Proteomes" id="UP000000448">
    <property type="component" value="Chromosome"/>
</dbReference>
<dbReference type="GO" id="GO:0005886">
    <property type="term" value="C:plasma membrane"/>
    <property type="evidence" value="ECO:0007669"/>
    <property type="project" value="UniProtKB-SubCell"/>
</dbReference>
<dbReference type="GO" id="GO:0045259">
    <property type="term" value="C:proton-transporting ATP synthase complex"/>
    <property type="evidence" value="ECO:0007669"/>
    <property type="project" value="UniProtKB-KW"/>
</dbReference>
<dbReference type="GO" id="GO:0005524">
    <property type="term" value="F:ATP binding"/>
    <property type="evidence" value="ECO:0007669"/>
    <property type="project" value="UniProtKB-UniRule"/>
</dbReference>
<dbReference type="GO" id="GO:0016887">
    <property type="term" value="F:ATP hydrolysis activity"/>
    <property type="evidence" value="ECO:0007669"/>
    <property type="project" value="InterPro"/>
</dbReference>
<dbReference type="GO" id="GO:0046933">
    <property type="term" value="F:proton-transporting ATP synthase activity, rotational mechanism"/>
    <property type="evidence" value="ECO:0007669"/>
    <property type="project" value="UniProtKB-UniRule"/>
</dbReference>
<dbReference type="CDD" id="cd18110">
    <property type="entry name" value="ATP-synt_F1_beta_C"/>
    <property type="match status" value="1"/>
</dbReference>
<dbReference type="CDD" id="cd18115">
    <property type="entry name" value="ATP-synt_F1_beta_N"/>
    <property type="match status" value="1"/>
</dbReference>
<dbReference type="CDD" id="cd01133">
    <property type="entry name" value="F1-ATPase_beta_CD"/>
    <property type="match status" value="1"/>
</dbReference>
<dbReference type="FunFam" id="1.10.1140.10:FF:000001">
    <property type="entry name" value="ATP synthase subunit beta"/>
    <property type="match status" value="1"/>
</dbReference>
<dbReference type="FunFam" id="3.40.50.300:FF:000004">
    <property type="entry name" value="ATP synthase subunit beta"/>
    <property type="match status" value="1"/>
</dbReference>
<dbReference type="Gene3D" id="2.40.10.170">
    <property type="match status" value="1"/>
</dbReference>
<dbReference type="Gene3D" id="1.10.1140.10">
    <property type="entry name" value="Bovine Mitochondrial F1-atpase, Atp Synthase Beta Chain, Chain D, domain 3"/>
    <property type="match status" value="1"/>
</dbReference>
<dbReference type="Gene3D" id="3.40.50.300">
    <property type="entry name" value="P-loop containing nucleotide triphosphate hydrolases"/>
    <property type="match status" value="1"/>
</dbReference>
<dbReference type="HAMAP" id="MF_01347">
    <property type="entry name" value="ATP_synth_beta_bact"/>
    <property type="match status" value="1"/>
</dbReference>
<dbReference type="InterPro" id="IPR003593">
    <property type="entry name" value="AAA+_ATPase"/>
</dbReference>
<dbReference type="InterPro" id="IPR055190">
    <property type="entry name" value="ATP-synt_VA_C"/>
</dbReference>
<dbReference type="InterPro" id="IPR005722">
    <property type="entry name" value="ATP_synth_F1_bsu"/>
</dbReference>
<dbReference type="InterPro" id="IPR020003">
    <property type="entry name" value="ATPase_a/bsu_AS"/>
</dbReference>
<dbReference type="InterPro" id="IPR050053">
    <property type="entry name" value="ATPase_alpha/beta_chains"/>
</dbReference>
<dbReference type="InterPro" id="IPR004100">
    <property type="entry name" value="ATPase_F1/V1/A1_a/bsu_N"/>
</dbReference>
<dbReference type="InterPro" id="IPR036121">
    <property type="entry name" value="ATPase_F1/V1/A1_a/bsu_N_sf"/>
</dbReference>
<dbReference type="InterPro" id="IPR000194">
    <property type="entry name" value="ATPase_F1/V1/A1_a/bsu_nucl-bd"/>
</dbReference>
<dbReference type="InterPro" id="IPR024034">
    <property type="entry name" value="ATPase_F1/V1_b/a_C"/>
</dbReference>
<dbReference type="InterPro" id="IPR027417">
    <property type="entry name" value="P-loop_NTPase"/>
</dbReference>
<dbReference type="NCBIfam" id="TIGR01039">
    <property type="entry name" value="atpD"/>
    <property type="match status" value="1"/>
</dbReference>
<dbReference type="PANTHER" id="PTHR15184">
    <property type="entry name" value="ATP SYNTHASE"/>
    <property type="match status" value="1"/>
</dbReference>
<dbReference type="PANTHER" id="PTHR15184:SF71">
    <property type="entry name" value="ATP SYNTHASE SUBUNIT BETA, MITOCHONDRIAL"/>
    <property type="match status" value="1"/>
</dbReference>
<dbReference type="Pfam" id="PF00006">
    <property type="entry name" value="ATP-synt_ab"/>
    <property type="match status" value="1"/>
</dbReference>
<dbReference type="Pfam" id="PF02874">
    <property type="entry name" value="ATP-synt_ab_N"/>
    <property type="match status" value="1"/>
</dbReference>
<dbReference type="Pfam" id="PF22919">
    <property type="entry name" value="ATP-synt_VA_C"/>
    <property type="match status" value="1"/>
</dbReference>
<dbReference type="SMART" id="SM00382">
    <property type="entry name" value="AAA"/>
    <property type="match status" value="1"/>
</dbReference>
<dbReference type="SUPFAM" id="SSF47917">
    <property type="entry name" value="C-terminal domain of alpha and beta subunits of F1 ATP synthase"/>
    <property type="match status" value="1"/>
</dbReference>
<dbReference type="SUPFAM" id="SSF50615">
    <property type="entry name" value="N-terminal domain of alpha and beta subunits of F1 ATP synthase"/>
    <property type="match status" value="1"/>
</dbReference>
<dbReference type="SUPFAM" id="SSF52540">
    <property type="entry name" value="P-loop containing nucleoside triphosphate hydrolases"/>
    <property type="match status" value="1"/>
</dbReference>
<dbReference type="PROSITE" id="PS00152">
    <property type="entry name" value="ATPASE_ALPHA_BETA"/>
    <property type="match status" value="1"/>
</dbReference>
<reference key="1">
    <citation type="journal article" date="2009" name="PLoS Genet.">
        <title>Adaptations to submarine hydrothermal environments exemplified by the genome of Nautilia profundicola.</title>
        <authorList>
            <person name="Campbell B.J."/>
            <person name="Smith J.L."/>
            <person name="Hanson T.E."/>
            <person name="Klotz M.G."/>
            <person name="Stein L.Y."/>
            <person name="Lee C.K."/>
            <person name="Wu D."/>
            <person name="Robinson J.M."/>
            <person name="Khouri H.M."/>
            <person name="Eisen J.A."/>
            <person name="Cary S.C."/>
        </authorList>
    </citation>
    <scope>NUCLEOTIDE SEQUENCE [LARGE SCALE GENOMIC DNA]</scope>
    <source>
        <strain>ATCC BAA-1463 / DSM 18972 / AmH</strain>
    </source>
</reference>
<name>ATPB_NAUPA</name>
<proteinExistence type="inferred from homology"/>
<sequence length="468" mass="51230">MEGKVLQILGPVVDVEFEGDIPAINEALYVEFEAEGEKKKVVLEVAAQIGDHIVRTIAMDLTDGLTRGEKVVATGAPIKVPVGEAVLGRIFNVTGDVIDGGEEVPADTPRWSIHRDAPPFEEQSTKMEVFETGIKVVDLLCPYMKGGKTGLFGGAGVGKTVIIMELIHNVAYKHSGYSVFAGVGERTREGNDLYHEMKESGVLDKVALCYGQMNEPPGCRNRVAMTGLTMAEYFRDEEGRDVLMFIDNIFRFAQAGAEMSALLGRIPSAVGYQPTLATEMGKLQERITSTKKGSITSIQAVYVPADDLTDPAPASVFAHLDSTTVLNRKIAEKGIYPAVDPLDSTSRILDPQIVGEEHYRVARGVQEVLQKYKDLQDIIAILGMDELSEEDKLTVARARKIEKFLSQPFFVAKVFTGADGRYVELDKTIAGFKEILEGKVDDLPENAFYMVGDLDEAKEKAEKMKAQS</sequence>
<comment type="function">
    <text evidence="1">Produces ATP from ADP in the presence of a proton gradient across the membrane. The catalytic sites are hosted primarily by the beta subunits.</text>
</comment>
<comment type="catalytic activity">
    <reaction evidence="1">
        <text>ATP + H2O + 4 H(+)(in) = ADP + phosphate + 5 H(+)(out)</text>
        <dbReference type="Rhea" id="RHEA:57720"/>
        <dbReference type="ChEBI" id="CHEBI:15377"/>
        <dbReference type="ChEBI" id="CHEBI:15378"/>
        <dbReference type="ChEBI" id="CHEBI:30616"/>
        <dbReference type="ChEBI" id="CHEBI:43474"/>
        <dbReference type="ChEBI" id="CHEBI:456216"/>
        <dbReference type="EC" id="7.1.2.2"/>
    </reaction>
</comment>
<comment type="subunit">
    <text evidence="1">F-type ATPases have 2 components, CF(1) - the catalytic core - and CF(0) - the membrane proton channel. CF(1) has five subunits: alpha(3), beta(3), gamma(1), delta(1), epsilon(1). CF(0) has three main subunits: a(1), b(2) and c(9-12). The alpha and beta chains form an alternating ring which encloses part of the gamma chain. CF(1) is attached to CF(0) by a central stalk formed by the gamma and epsilon chains, while a peripheral stalk is formed by the delta and b chains.</text>
</comment>
<comment type="subcellular location">
    <subcellularLocation>
        <location evidence="1">Cell inner membrane</location>
        <topology evidence="1">Peripheral membrane protein</topology>
    </subcellularLocation>
</comment>
<comment type="similarity">
    <text evidence="1">Belongs to the ATPase alpha/beta chains family.</text>
</comment>
<accession>B9L7Y7</accession>
<gene>
    <name evidence="1" type="primary">atpD</name>
    <name type="ordered locus">NAMH_0322</name>
</gene>